<sequence>MNIFEELKARGLVFQTTDEEALVKALTEGQVSYYTGYDPTADSLHLGHLVAILTSRRLQLAGHKPYALVGGATGLIGDPSFKDAERSLQTKETVLEWSGKIKGQLSQFLDFENGANKAELVNNYDWFSQISFIDFLRDVGKYFTVNYMMSKDSVKKRIETGISYTEFAYQIMQGYDFYELNQKFNVTLQIGGSDQWGNMTAGTELLRRKADKTGHVMTVPLITDANGKKFGKSEGNAVWLDADKTSPYEMYQFWLNVMDEDAIRFLKIFTFLSLEEIAEIEKAFDAARHERLAQKTLAKEVVTLVHGEEAFKQALNITEQLFAGNIKNLSAAELKQGLSNVPNYQVQDEDNLNIVEILVSSSISPSKRQAREDVQNGAIYLNGERIQDLDYTLTEDDKIDGQLTVIRRGKKKYAVLTY</sequence>
<evidence type="ECO:0000255" key="1">
    <source>
        <dbReference type="HAMAP-Rule" id="MF_02006"/>
    </source>
</evidence>
<protein>
    <recommendedName>
        <fullName evidence="1">Tyrosine--tRNA ligase</fullName>
        <ecNumber evidence="1">6.1.1.1</ecNumber>
    </recommendedName>
    <alternativeName>
        <fullName evidence="1">Tyrosyl-tRNA synthetase</fullName>
        <shortName evidence="1">TyrRS</shortName>
    </alternativeName>
</protein>
<name>SYY_STRU0</name>
<feature type="chain" id="PRO_1000189340" description="Tyrosine--tRNA ligase">
    <location>
        <begin position="1"/>
        <end position="418"/>
    </location>
</feature>
<feature type="domain" description="S4 RNA-binding" evidence="1">
    <location>
        <begin position="352"/>
        <end position="418"/>
    </location>
</feature>
<feature type="short sequence motif" description="'HIGH' region">
    <location>
        <begin position="39"/>
        <end position="48"/>
    </location>
</feature>
<feature type="short sequence motif" description="'KMSKS' region">
    <location>
        <begin position="229"/>
        <end position="233"/>
    </location>
</feature>
<feature type="binding site" evidence="1">
    <location>
        <position position="34"/>
    </location>
    <ligand>
        <name>L-tyrosine</name>
        <dbReference type="ChEBI" id="CHEBI:58315"/>
    </ligand>
</feature>
<feature type="binding site" evidence="1">
    <location>
        <position position="169"/>
    </location>
    <ligand>
        <name>L-tyrosine</name>
        <dbReference type="ChEBI" id="CHEBI:58315"/>
    </ligand>
</feature>
<feature type="binding site" evidence="1">
    <location>
        <position position="173"/>
    </location>
    <ligand>
        <name>L-tyrosine</name>
        <dbReference type="ChEBI" id="CHEBI:58315"/>
    </ligand>
</feature>
<feature type="binding site" evidence="1">
    <location>
        <position position="232"/>
    </location>
    <ligand>
        <name>ATP</name>
        <dbReference type="ChEBI" id="CHEBI:30616"/>
    </ligand>
</feature>
<organism>
    <name type="scientific">Streptococcus uberis (strain ATCC BAA-854 / 0140J)</name>
    <dbReference type="NCBI Taxonomy" id="218495"/>
    <lineage>
        <taxon>Bacteria</taxon>
        <taxon>Bacillati</taxon>
        <taxon>Bacillota</taxon>
        <taxon>Bacilli</taxon>
        <taxon>Lactobacillales</taxon>
        <taxon>Streptococcaceae</taxon>
        <taxon>Streptococcus</taxon>
    </lineage>
</organism>
<comment type="function">
    <text evidence="1">Catalyzes the attachment of tyrosine to tRNA(Tyr) in a two-step reaction: tyrosine is first activated by ATP to form Tyr-AMP and then transferred to the acceptor end of tRNA(Tyr).</text>
</comment>
<comment type="catalytic activity">
    <reaction evidence="1">
        <text>tRNA(Tyr) + L-tyrosine + ATP = L-tyrosyl-tRNA(Tyr) + AMP + diphosphate + H(+)</text>
        <dbReference type="Rhea" id="RHEA:10220"/>
        <dbReference type="Rhea" id="RHEA-COMP:9706"/>
        <dbReference type="Rhea" id="RHEA-COMP:9707"/>
        <dbReference type="ChEBI" id="CHEBI:15378"/>
        <dbReference type="ChEBI" id="CHEBI:30616"/>
        <dbReference type="ChEBI" id="CHEBI:33019"/>
        <dbReference type="ChEBI" id="CHEBI:58315"/>
        <dbReference type="ChEBI" id="CHEBI:78442"/>
        <dbReference type="ChEBI" id="CHEBI:78536"/>
        <dbReference type="ChEBI" id="CHEBI:456215"/>
        <dbReference type="EC" id="6.1.1.1"/>
    </reaction>
</comment>
<comment type="subunit">
    <text evidence="1">Homodimer.</text>
</comment>
<comment type="subcellular location">
    <subcellularLocation>
        <location evidence="1">Cytoplasm</location>
    </subcellularLocation>
</comment>
<comment type="similarity">
    <text evidence="1">Belongs to the class-I aminoacyl-tRNA synthetase family. TyrS type 1 subfamily.</text>
</comment>
<dbReference type="EC" id="6.1.1.1" evidence="1"/>
<dbReference type="EMBL" id="AM946015">
    <property type="protein sequence ID" value="CAR40521.1"/>
    <property type="molecule type" value="Genomic_DNA"/>
</dbReference>
<dbReference type="RefSeq" id="WP_012657668.1">
    <property type="nucleotide sequence ID" value="NC_012004.1"/>
</dbReference>
<dbReference type="SMR" id="B9DSZ3"/>
<dbReference type="STRING" id="218495.SUB0113"/>
<dbReference type="KEGG" id="sub:SUB0113"/>
<dbReference type="eggNOG" id="COG0162">
    <property type="taxonomic scope" value="Bacteria"/>
</dbReference>
<dbReference type="HOGENOM" id="CLU_024003_0_3_9"/>
<dbReference type="OrthoDB" id="9804243at2"/>
<dbReference type="Proteomes" id="UP000000449">
    <property type="component" value="Chromosome"/>
</dbReference>
<dbReference type="GO" id="GO:0005829">
    <property type="term" value="C:cytosol"/>
    <property type="evidence" value="ECO:0007669"/>
    <property type="project" value="TreeGrafter"/>
</dbReference>
<dbReference type="GO" id="GO:0005524">
    <property type="term" value="F:ATP binding"/>
    <property type="evidence" value="ECO:0007669"/>
    <property type="project" value="UniProtKB-UniRule"/>
</dbReference>
<dbReference type="GO" id="GO:0003723">
    <property type="term" value="F:RNA binding"/>
    <property type="evidence" value="ECO:0007669"/>
    <property type="project" value="UniProtKB-KW"/>
</dbReference>
<dbReference type="GO" id="GO:0004831">
    <property type="term" value="F:tyrosine-tRNA ligase activity"/>
    <property type="evidence" value="ECO:0007669"/>
    <property type="project" value="UniProtKB-UniRule"/>
</dbReference>
<dbReference type="GO" id="GO:0006437">
    <property type="term" value="P:tyrosyl-tRNA aminoacylation"/>
    <property type="evidence" value="ECO:0007669"/>
    <property type="project" value="UniProtKB-UniRule"/>
</dbReference>
<dbReference type="CDD" id="cd00165">
    <property type="entry name" value="S4"/>
    <property type="match status" value="1"/>
</dbReference>
<dbReference type="CDD" id="cd00805">
    <property type="entry name" value="TyrRS_core"/>
    <property type="match status" value="1"/>
</dbReference>
<dbReference type="FunFam" id="1.10.240.10:FF:000001">
    <property type="entry name" value="Tyrosine--tRNA ligase"/>
    <property type="match status" value="1"/>
</dbReference>
<dbReference type="FunFam" id="3.40.50.620:FF:000008">
    <property type="entry name" value="Tyrosine--tRNA ligase"/>
    <property type="match status" value="1"/>
</dbReference>
<dbReference type="Gene3D" id="3.40.50.620">
    <property type="entry name" value="HUPs"/>
    <property type="match status" value="1"/>
</dbReference>
<dbReference type="Gene3D" id="3.10.290.10">
    <property type="entry name" value="RNA-binding S4 domain"/>
    <property type="match status" value="1"/>
</dbReference>
<dbReference type="Gene3D" id="1.10.240.10">
    <property type="entry name" value="Tyrosyl-Transfer RNA Synthetase"/>
    <property type="match status" value="1"/>
</dbReference>
<dbReference type="HAMAP" id="MF_02006">
    <property type="entry name" value="Tyr_tRNA_synth_type1"/>
    <property type="match status" value="1"/>
</dbReference>
<dbReference type="InterPro" id="IPR001412">
    <property type="entry name" value="aa-tRNA-synth_I_CS"/>
</dbReference>
<dbReference type="InterPro" id="IPR002305">
    <property type="entry name" value="aa-tRNA-synth_Ic"/>
</dbReference>
<dbReference type="InterPro" id="IPR014729">
    <property type="entry name" value="Rossmann-like_a/b/a_fold"/>
</dbReference>
<dbReference type="InterPro" id="IPR002942">
    <property type="entry name" value="S4_RNA-bd"/>
</dbReference>
<dbReference type="InterPro" id="IPR036986">
    <property type="entry name" value="S4_RNA-bd_sf"/>
</dbReference>
<dbReference type="InterPro" id="IPR054608">
    <property type="entry name" value="SYY-like_C"/>
</dbReference>
<dbReference type="InterPro" id="IPR002307">
    <property type="entry name" value="Tyr-tRNA-ligase"/>
</dbReference>
<dbReference type="InterPro" id="IPR024088">
    <property type="entry name" value="Tyr-tRNA-ligase_bac-type"/>
</dbReference>
<dbReference type="InterPro" id="IPR024107">
    <property type="entry name" value="Tyr-tRNA-ligase_bac_1"/>
</dbReference>
<dbReference type="NCBIfam" id="TIGR00234">
    <property type="entry name" value="tyrS"/>
    <property type="match status" value="1"/>
</dbReference>
<dbReference type="PANTHER" id="PTHR11766:SF0">
    <property type="entry name" value="TYROSINE--TRNA LIGASE, MITOCHONDRIAL"/>
    <property type="match status" value="1"/>
</dbReference>
<dbReference type="PANTHER" id="PTHR11766">
    <property type="entry name" value="TYROSYL-TRNA SYNTHETASE"/>
    <property type="match status" value="1"/>
</dbReference>
<dbReference type="Pfam" id="PF22421">
    <property type="entry name" value="SYY_C-terminal"/>
    <property type="match status" value="1"/>
</dbReference>
<dbReference type="Pfam" id="PF00579">
    <property type="entry name" value="tRNA-synt_1b"/>
    <property type="match status" value="1"/>
</dbReference>
<dbReference type="PRINTS" id="PR01040">
    <property type="entry name" value="TRNASYNTHTYR"/>
</dbReference>
<dbReference type="SMART" id="SM00363">
    <property type="entry name" value="S4"/>
    <property type="match status" value="1"/>
</dbReference>
<dbReference type="SUPFAM" id="SSF55174">
    <property type="entry name" value="Alpha-L RNA-binding motif"/>
    <property type="match status" value="1"/>
</dbReference>
<dbReference type="SUPFAM" id="SSF52374">
    <property type="entry name" value="Nucleotidylyl transferase"/>
    <property type="match status" value="1"/>
</dbReference>
<dbReference type="PROSITE" id="PS00178">
    <property type="entry name" value="AA_TRNA_LIGASE_I"/>
    <property type="match status" value="1"/>
</dbReference>
<dbReference type="PROSITE" id="PS50889">
    <property type="entry name" value="S4"/>
    <property type="match status" value="1"/>
</dbReference>
<keyword id="KW-0030">Aminoacyl-tRNA synthetase</keyword>
<keyword id="KW-0067">ATP-binding</keyword>
<keyword id="KW-0963">Cytoplasm</keyword>
<keyword id="KW-0436">Ligase</keyword>
<keyword id="KW-0547">Nucleotide-binding</keyword>
<keyword id="KW-0648">Protein biosynthesis</keyword>
<keyword id="KW-1185">Reference proteome</keyword>
<keyword id="KW-0694">RNA-binding</keyword>
<reference key="1">
    <citation type="journal article" date="2009" name="BMC Genomics">
        <title>Evidence for niche adaptation in the genome of the bovine pathogen Streptococcus uberis.</title>
        <authorList>
            <person name="Ward P.N."/>
            <person name="Holden M.T.G."/>
            <person name="Leigh J.A."/>
            <person name="Lennard N."/>
            <person name="Bignell A."/>
            <person name="Barron A."/>
            <person name="Clark L."/>
            <person name="Quail M.A."/>
            <person name="Woodward J."/>
            <person name="Barrell B.G."/>
            <person name="Egan S.A."/>
            <person name="Field T.R."/>
            <person name="Maskell D."/>
            <person name="Kehoe M."/>
            <person name="Dowson C.G."/>
            <person name="Chanter N."/>
            <person name="Whatmore A.M."/>
            <person name="Bentley S.D."/>
            <person name="Parkhill J."/>
        </authorList>
    </citation>
    <scope>NUCLEOTIDE SEQUENCE [LARGE SCALE GENOMIC DNA]</scope>
    <source>
        <strain>ATCC BAA-854 / 0140J</strain>
    </source>
</reference>
<proteinExistence type="inferred from homology"/>
<gene>
    <name evidence="1" type="primary">tyrS</name>
    <name type="ordered locus">SUB0113</name>
</gene>
<accession>B9DSZ3</accession>